<dbReference type="EMBL" id="CP000758">
    <property type="protein sequence ID" value="ABS13570.1"/>
    <property type="molecule type" value="Genomic_DNA"/>
</dbReference>
<dbReference type="RefSeq" id="WP_010657658.1">
    <property type="nucleotide sequence ID" value="NC_009667.1"/>
</dbReference>
<dbReference type="SMR" id="A6WX66"/>
<dbReference type="STRING" id="439375.Oant_0848"/>
<dbReference type="GeneID" id="61318706"/>
<dbReference type="KEGG" id="oan:Oant_0848"/>
<dbReference type="eggNOG" id="COG1952">
    <property type="taxonomic scope" value="Bacteria"/>
</dbReference>
<dbReference type="HOGENOM" id="CLU_111574_0_0_5"/>
<dbReference type="PhylomeDB" id="A6WX66"/>
<dbReference type="Proteomes" id="UP000002301">
    <property type="component" value="Chromosome 1"/>
</dbReference>
<dbReference type="GO" id="GO:0005737">
    <property type="term" value="C:cytoplasm"/>
    <property type="evidence" value="ECO:0007669"/>
    <property type="project" value="UniProtKB-SubCell"/>
</dbReference>
<dbReference type="GO" id="GO:0051082">
    <property type="term" value="F:unfolded protein binding"/>
    <property type="evidence" value="ECO:0007669"/>
    <property type="project" value="InterPro"/>
</dbReference>
<dbReference type="GO" id="GO:0006457">
    <property type="term" value="P:protein folding"/>
    <property type="evidence" value="ECO:0007669"/>
    <property type="project" value="UniProtKB-UniRule"/>
</dbReference>
<dbReference type="GO" id="GO:0051262">
    <property type="term" value="P:protein tetramerization"/>
    <property type="evidence" value="ECO:0007669"/>
    <property type="project" value="InterPro"/>
</dbReference>
<dbReference type="GO" id="GO:0015031">
    <property type="term" value="P:protein transport"/>
    <property type="evidence" value="ECO:0007669"/>
    <property type="project" value="UniProtKB-UniRule"/>
</dbReference>
<dbReference type="Gene3D" id="3.10.420.10">
    <property type="entry name" value="SecB-like"/>
    <property type="match status" value="1"/>
</dbReference>
<dbReference type="HAMAP" id="MF_00821">
    <property type="entry name" value="SecB"/>
    <property type="match status" value="1"/>
</dbReference>
<dbReference type="InterPro" id="IPR003708">
    <property type="entry name" value="SecB"/>
</dbReference>
<dbReference type="InterPro" id="IPR035958">
    <property type="entry name" value="SecB-like_sf"/>
</dbReference>
<dbReference type="NCBIfam" id="NF004392">
    <property type="entry name" value="PRK05751.1-3"/>
    <property type="match status" value="1"/>
</dbReference>
<dbReference type="NCBIfam" id="TIGR00809">
    <property type="entry name" value="secB"/>
    <property type="match status" value="1"/>
</dbReference>
<dbReference type="PANTHER" id="PTHR36918">
    <property type="match status" value="1"/>
</dbReference>
<dbReference type="PANTHER" id="PTHR36918:SF1">
    <property type="entry name" value="PROTEIN-EXPORT PROTEIN SECB"/>
    <property type="match status" value="1"/>
</dbReference>
<dbReference type="Pfam" id="PF02556">
    <property type="entry name" value="SecB"/>
    <property type="match status" value="1"/>
</dbReference>
<dbReference type="PRINTS" id="PR01594">
    <property type="entry name" value="SECBCHAPRONE"/>
</dbReference>
<dbReference type="SUPFAM" id="SSF54611">
    <property type="entry name" value="SecB-like"/>
    <property type="match status" value="1"/>
</dbReference>
<name>SECB_BRUA4</name>
<feature type="chain" id="PRO_1000062489" description="Protein-export protein SecB">
    <location>
        <begin position="1"/>
        <end position="163"/>
    </location>
</feature>
<comment type="function">
    <text evidence="1">One of the proteins required for the normal export of preproteins out of the cell cytoplasm. It is a molecular chaperone that binds to a subset of precursor proteins, maintaining them in a translocation-competent state. It also specifically binds to its receptor SecA.</text>
</comment>
<comment type="subunit">
    <text evidence="1">Homotetramer, a dimer of dimers. One homotetramer interacts with 1 SecA dimer.</text>
</comment>
<comment type="subcellular location">
    <subcellularLocation>
        <location evidence="1">Cytoplasm</location>
    </subcellularLocation>
</comment>
<comment type="similarity">
    <text evidence="1">Belongs to the SecB family.</text>
</comment>
<evidence type="ECO:0000255" key="1">
    <source>
        <dbReference type="HAMAP-Rule" id="MF_00821"/>
    </source>
</evidence>
<sequence>MSDKAAGEVKNGNGATAEPSLNILAQYVKDLSFESPGAPLSLRPREKAPSININVNVNANPLSETDFDVVLTLEAKAVDGKDVLFNTELVYGGVFRIQGIPQEHMLPLLFIECPRLLFPFARQIIADATRNGGYPPLMIDPIDFAQMFQQRMAEEQAKSAVKS</sequence>
<gene>
    <name evidence="1" type="primary">secB</name>
    <name type="ordered locus">Oant_0848</name>
</gene>
<organism>
    <name type="scientific">Brucella anthropi (strain ATCC 49188 / DSM 6882 / CCUG 24695 / JCM 21032 / LMG 3331 / NBRC 15819 / NCTC 12168 / Alc 37)</name>
    <name type="common">Ochrobactrum anthropi</name>
    <dbReference type="NCBI Taxonomy" id="439375"/>
    <lineage>
        <taxon>Bacteria</taxon>
        <taxon>Pseudomonadati</taxon>
        <taxon>Pseudomonadota</taxon>
        <taxon>Alphaproteobacteria</taxon>
        <taxon>Hyphomicrobiales</taxon>
        <taxon>Brucellaceae</taxon>
        <taxon>Brucella/Ochrobactrum group</taxon>
        <taxon>Brucella</taxon>
    </lineage>
</organism>
<reference key="1">
    <citation type="journal article" date="2011" name="J. Bacteriol.">
        <title>Genome of Ochrobactrum anthropi ATCC 49188 T, a versatile opportunistic pathogen and symbiont of several eukaryotic hosts.</title>
        <authorList>
            <person name="Chain P.S."/>
            <person name="Lang D.M."/>
            <person name="Comerci D.J."/>
            <person name="Malfatti S.A."/>
            <person name="Vergez L.M."/>
            <person name="Shin M."/>
            <person name="Ugalde R.A."/>
            <person name="Garcia E."/>
            <person name="Tolmasky M.E."/>
        </authorList>
    </citation>
    <scope>NUCLEOTIDE SEQUENCE [LARGE SCALE GENOMIC DNA]</scope>
    <source>
        <strain>ATCC 49188 / DSM 6882 / CCUG 24695 / JCM 21032 / LMG 3331 / NBRC 15819 / NCTC 12168 / Alc 37</strain>
    </source>
</reference>
<protein>
    <recommendedName>
        <fullName evidence="1">Protein-export protein SecB</fullName>
    </recommendedName>
</protein>
<accession>A6WX66</accession>
<keyword id="KW-0143">Chaperone</keyword>
<keyword id="KW-0963">Cytoplasm</keyword>
<keyword id="KW-0653">Protein transport</keyword>
<keyword id="KW-1185">Reference proteome</keyword>
<keyword id="KW-0811">Translocation</keyword>
<keyword id="KW-0813">Transport</keyword>
<proteinExistence type="inferred from homology"/>